<gene>
    <name evidence="1" type="primary">leuD</name>
    <name type="ordered locus">SAR11_0251</name>
</gene>
<proteinExistence type="inferred from homology"/>
<reference key="1">
    <citation type="journal article" date="2005" name="Science">
        <title>Genome streamlining in a cosmopolitan oceanic bacterium.</title>
        <authorList>
            <person name="Giovannoni S.J."/>
            <person name="Tripp H.J."/>
            <person name="Givan S."/>
            <person name="Podar M."/>
            <person name="Vergin K.L."/>
            <person name="Baptista D."/>
            <person name="Bibbs L."/>
            <person name="Eads J."/>
            <person name="Richardson T.H."/>
            <person name="Noordewier M."/>
            <person name="Rappe M.S."/>
            <person name="Short J.M."/>
            <person name="Carrington J.C."/>
            <person name="Mathur E.J."/>
        </authorList>
    </citation>
    <scope>NUCLEOTIDE SEQUENCE [LARGE SCALE GENOMIC DNA]</scope>
    <source>
        <strain>HTCC1062</strain>
    </source>
</reference>
<comment type="function">
    <text evidence="1">Catalyzes the isomerization between 2-isopropylmalate and 3-isopropylmalate, via the formation of 2-isopropylmaleate.</text>
</comment>
<comment type="catalytic activity">
    <reaction evidence="1">
        <text>(2R,3S)-3-isopropylmalate = (2S)-2-isopropylmalate</text>
        <dbReference type="Rhea" id="RHEA:32287"/>
        <dbReference type="ChEBI" id="CHEBI:1178"/>
        <dbReference type="ChEBI" id="CHEBI:35121"/>
        <dbReference type="EC" id="4.2.1.33"/>
    </reaction>
</comment>
<comment type="pathway">
    <text evidence="1">Amino-acid biosynthesis; L-leucine biosynthesis; L-leucine from 3-methyl-2-oxobutanoate: step 2/4.</text>
</comment>
<comment type="subunit">
    <text evidence="1">Heterodimer of LeuC and LeuD.</text>
</comment>
<comment type="similarity">
    <text evidence="1">Belongs to the LeuD family. LeuD type 1 subfamily.</text>
</comment>
<dbReference type="EC" id="4.2.1.33" evidence="1"/>
<dbReference type="EMBL" id="CP000084">
    <property type="protein sequence ID" value="AAZ21073.1"/>
    <property type="molecule type" value="Genomic_DNA"/>
</dbReference>
<dbReference type="RefSeq" id="WP_011281572.1">
    <property type="nucleotide sequence ID" value="NC_007205.1"/>
</dbReference>
<dbReference type="SMR" id="Q4FP16"/>
<dbReference type="STRING" id="335992.SAR11_0251"/>
<dbReference type="GeneID" id="66294749"/>
<dbReference type="KEGG" id="pub:SAR11_0251"/>
<dbReference type="eggNOG" id="COG0066">
    <property type="taxonomic scope" value="Bacteria"/>
</dbReference>
<dbReference type="HOGENOM" id="CLU_081378_0_3_5"/>
<dbReference type="UniPathway" id="UPA00048">
    <property type="reaction ID" value="UER00071"/>
</dbReference>
<dbReference type="Proteomes" id="UP000002528">
    <property type="component" value="Chromosome"/>
</dbReference>
<dbReference type="GO" id="GO:0009316">
    <property type="term" value="C:3-isopropylmalate dehydratase complex"/>
    <property type="evidence" value="ECO:0007669"/>
    <property type="project" value="InterPro"/>
</dbReference>
<dbReference type="GO" id="GO:0003861">
    <property type="term" value="F:3-isopropylmalate dehydratase activity"/>
    <property type="evidence" value="ECO:0007669"/>
    <property type="project" value="UniProtKB-UniRule"/>
</dbReference>
<dbReference type="GO" id="GO:0009098">
    <property type="term" value="P:L-leucine biosynthetic process"/>
    <property type="evidence" value="ECO:0007669"/>
    <property type="project" value="UniProtKB-UniRule"/>
</dbReference>
<dbReference type="CDD" id="cd01577">
    <property type="entry name" value="IPMI_Swivel"/>
    <property type="match status" value="1"/>
</dbReference>
<dbReference type="FunFam" id="3.20.19.10:FF:000003">
    <property type="entry name" value="3-isopropylmalate dehydratase small subunit"/>
    <property type="match status" value="1"/>
</dbReference>
<dbReference type="Gene3D" id="3.20.19.10">
    <property type="entry name" value="Aconitase, domain 4"/>
    <property type="match status" value="1"/>
</dbReference>
<dbReference type="HAMAP" id="MF_01031">
    <property type="entry name" value="LeuD_type1"/>
    <property type="match status" value="1"/>
</dbReference>
<dbReference type="InterPro" id="IPR004431">
    <property type="entry name" value="3-IsopropMal_deHydase_ssu"/>
</dbReference>
<dbReference type="InterPro" id="IPR015928">
    <property type="entry name" value="Aconitase/3IPM_dehydase_swvl"/>
</dbReference>
<dbReference type="InterPro" id="IPR000573">
    <property type="entry name" value="AconitaseA/IPMdHydase_ssu_swvl"/>
</dbReference>
<dbReference type="InterPro" id="IPR033940">
    <property type="entry name" value="IPMI_Swivel"/>
</dbReference>
<dbReference type="InterPro" id="IPR050075">
    <property type="entry name" value="LeuD"/>
</dbReference>
<dbReference type="NCBIfam" id="TIGR00171">
    <property type="entry name" value="leuD"/>
    <property type="match status" value="1"/>
</dbReference>
<dbReference type="NCBIfam" id="NF002458">
    <property type="entry name" value="PRK01641.1"/>
    <property type="match status" value="1"/>
</dbReference>
<dbReference type="PANTHER" id="PTHR43345:SF5">
    <property type="entry name" value="3-ISOPROPYLMALATE DEHYDRATASE SMALL SUBUNIT"/>
    <property type="match status" value="1"/>
</dbReference>
<dbReference type="PANTHER" id="PTHR43345">
    <property type="entry name" value="3-ISOPROPYLMALATE DEHYDRATASE SMALL SUBUNIT 2-RELATED-RELATED"/>
    <property type="match status" value="1"/>
</dbReference>
<dbReference type="Pfam" id="PF00694">
    <property type="entry name" value="Aconitase_C"/>
    <property type="match status" value="1"/>
</dbReference>
<dbReference type="SUPFAM" id="SSF52016">
    <property type="entry name" value="LeuD/IlvD-like"/>
    <property type="match status" value="1"/>
</dbReference>
<feature type="chain" id="PRO_0000141853" description="3-isopropylmalate dehydratase small subunit">
    <location>
        <begin position="1"/>
        <end position="203"/>
    </location>
</feature>
<accession>Q4FP16</accession>
<protein>
    <recommendedName>
        <fullName evidence="1">3-isopropylmalate dehydratase small subunit</fullName>
        <ecNumber evidence="1">4.2.1.33</ecNumber>
    </recommendedName>
    <alternativeName>
        <fullName evidence="1">Alpha-IPM isomerase</fullName>
        <shortName evidence="1">IPMI</shortName>
    </alternativeName>
    <alternativeName>
        <fullName evidence="1">Isopropylmalate isomerase</fullName>
    </alternativeName>
</protein>
<organism>
    <name type="scientific">Pelagibacter ubique (strain HTCC1062)</name>
    <dbReference type="NCBI Taxonomy" id="335992"/>
    <lineage>
        <taxon>Bacteria</taxon>
        <taxon>Pseudomonadati</taxon>
        <taxon>Pseudomonadota</taxon>
        <taxon>Alphaproteobacteria</taxon>
        <taxon>Candidatus Pelagibacterales</taxon>
        <taxon>Candidatus Pelagibacteraceae</taxon>
        <taxon>Candidatus Pelagibacter</taxon>
    </lineage>
</organism>
<name>LEUD_PELUB</name>
<sequence>MQKFNSLTSIPAYLPIVNIDTDMIIPKQFLKTIKRTGLGKNLFFEMRYDDNGNEIKDFILNQKPHNQSKILIAGKNFGCGSSREHAPWALLDFGITCVISSSYADIFYSNCFKNGILPITLPEEKIKELSEYSKRKEEISIDLNEEKIIFGNSEIKFDIDPFKKKCLLEGLDDIALSLAKKEKIITFEENLKNNKPWIFNDKN</sequence>
<evidence type="ECO:0000255" key="1">
    <source>
        <dbReference type="HAMAP-Rule" id="MF_01031"/>
    </source>
</evidence>
<keyword id="KW-0028">Amino-acid biosynthesis</keyword>
<keyword id="KW-0100">Branched-chain amino acid biosynthesis</keyword>
<keyword id="KW-0432">Leucine biosynthesis</keyword>
<keyword id="KW-0456">Lyase</keyword>
<keyword id="KW-1185">Reference proteome</keyword>